<proteinExistence type="inferred from homology"/>
<evidence type="ECO:0000250" key="1">
    <source>
        <dbReference type="UniProtKB" id="Q9MAB9"/>
    </source>
</evidence>
<evidence type="ECO:0000255" key="2">
    <source>
        <dbReference type="PROSITE-ProRule" id="PRU00214"/>
    </source>
</evidence>
<evidence type="ECO:0000305" key="3"/>
<evidence type="ECO:0000312" key="4">
    <source>
        <dbReference type="EMBL" id="EEE59297.1"/>
    </source>
</evidence>
<organism>
    <name type="scientific">Oryza sativa subsp. japonica</name>
    <name type="common">Rice</name>
    <dbReference type="NCBI Taxonomy" id="39947"/>
    <lineage>
        <taxon>Eukaryota</taxon>
        <taxon>Viridiplantae</taxon>
        <taxon>Streptophyta</taxon>
        <taxon>Embryophyta</taxon>
        <taxon>Tracheophyta</taxon>
        <taxon>Spermatophyta</taxon>
        <taxon>Magnoliopsida</taxon>
        <taxon>Liliopsida</taxon>
        <taxon>Poales</taxon>
        <taxon>Poaceae</taxon>
        <taxon>BOP clade</taxon>
        <taxon>Oryzoideae</taxon>
        <taxon>Oryzeae</taxon>
        <taxon>Oryzinae</taxon>
        <taxon>Oryza</taxon>
        <taxon>Oryza sativa</taxon>
    </lineage>
</organism>
<dbReference type="EMBL" id="AC137999">
    <property type="protein sequence ID" value="AAS07214.1"/>
    <property type="molecule type" value="Genomic_DNA"/>
</dbReference>
<dbReference type="EMBL" id="DP000009">
    <property type="protein sequence ID" value="ABF96721.1"/>
    <property type="molecule type" value="Genomic_DNA"/>
</dbReference>
<dbReference type="EMBL" id="AP008209">
    <property type="protein sequence ID" value="BAF12323.1"/>
    <property type="molecule type" value="Genomic_DNA"/>
</dbReference>
<dbReference type="EMBL" id="AP014959">
    <property type="protein sequence ID" value="BAS84786.1"/>
    <property type="molecule type" value="Genomic_DNA"/>
</dbReference>
<dbReference type="EMBL" id="CM000140">
    <property type="protein sequence ID" value="EEE59297.1"/>
    <property type="molecule type" value="Genomic_DNA"/>
</dbReference>
<dbReference type="EMBL" id="AK099511">
    <property type="protein sequence ID" value="BAG94167.1"/>
    <property type="molecule type" value="mRNA"/>
</dbReference>
<dbReference type="RefSeq" id="XP_015630437.1">
    <property type="nucleotide sequence ID" value="XM_015774951.1"/>
</dbReference>
<dbReference type="SMR" id="Q75GT2"/>
<dbReference type="FunCoup" id="Q75GT2">
    <property type="interactions" value="273"/>
</dbReference>
<dbReference type="PaxDb" id="39947-Q75GT2"/>
<dbReference type="EnsemblPlants" id="Os03t0426800-01">
    <property type="protein sequence ID" value="Os03t0426800-01"/>
    <property type="gene ID" value="Os03g0426800"/>
</dbReference>
<dbReference type="Gramene" id="Os03t0426800-01">
    <property type="protein sequence ID" value="Os03t0426800-01"/>
    <property type="gene ID" value="Os03g0426800"/>
</dbReference>
<dbReference type="KEGG" id="dosa:Os03g0426800"/>
<dbReference type="eggNOG" id="ENOG502RZYK">
    <property type="taxonomic scope" value="Eukaryota"/>
</dbReference>
<dbReference type="HOGENOM" id="CLU_136465_1_0_1"/>
<dbReference type="InParanoid" id="Q75GT2"/>
<dbReference type="OMA" id="MAEVKDQ"/>
<dbReference type="OrthoDB" id="1043111at2759"/>
<dbReference type="Proteomes" id="UP000000763">
    <property type="component" value="Chromosome 3"/>
</dbReference>
<dbReference type="Proteomes" id="UP000007752">
    <property type="component" value="Chromosome 3"/>
</dbReference>
<dbReference type="Proteomes" id="UP000059680">
    <property type="component" value="Chromosome 3"/>
</dbReference>
<dbReference type="GO" id="GO:0005886">
    <property type="term" value="C:plasma membrane"/>
    <property type="evidence" value="ECO:0007669"/>
    <property type="project" value="UniProtKB-SubCell"/>
</dbReference>
<dbReference type="CDD" id="cd01814">
    <property type="entry name" value="Ubl_MUBs_plant"/>
    <property type="match status" value="1"/>
</dbReference>
<dbReference type="Gene3D" id="3.10.20.90">
    <property type="entry name" value="Phosphatidylinositol 3-kinase Catalytic Subunit, Chain A, domain 1"/>
    <property type="match status" value="1"/>
</dbReference>
<dbReference type="InterPro" id="IPR017000">
    <property type="entry name" value="MUB"/>
</dbReference>
<dbReference type="InterPro" id="IPR000626">
    <property type="entry name" value="Ubiquitin-like_dom"/>
</dbReference>
<dbReference type="InterPro" id="IPR029071">
    <property type="entry name" value="Ubiquitin-like_domsf"/>
</dbReference>
<dbReference type="InterPro" id="IPR040015">
    <property type="entry name" value="UBL3-like"/>
</dbReference>
<dbReference type="InterPro" id="IPR039540">
    <property type="entry name" value="UBL3-like_ubiquitin_dom"/>
</dbReference>
<dbReference type="PANTHER" id="PTHR13169:SF26">
    <property type="entry name" value="MEMBRANE-ANCHORED UBIQUITIN-FOLD PROTEIN 2"/>
    <property type="match status" value="1"/>
</dbReference>
<dbReference type="PANTHER" id="PTHR13169">
    <property type="entry name" value="UBIQUITIN-LIKE PROTEIN 3 HCG-1 PROTEIN"/>
    <property type="match status" value="1"/>
</dbReference>
<dbReference type="Pfam" id="PF13881">
    <property type="entry name" value="Rad60-SLD_2"/>
    <property type="match status" value="1"/>
</dbReference>
<dbReference type="PIRSF" id="PIRSF032572">
    <property type="entry name" value="MUB"/>
    <property type="match status" value="1"/>
</dbReference>
<dbReference type="SUPFAM" id="SSF54236">
    <property type="entry name" value="Ubiquitin-like"/>
    <property type="match status" value="1"/>
</dbReference>
<dbReference type="PROSITE" id="PS50053">
    <property type="entry name" value="UBIQUITIN_2"/>
    <property type="match status" value="1"/>
</dbReference>
<gene>
    <name type="primary">MUB1</name>
    <name type="ordered locus">Os03g0426800</name>
    <name type="ordered locus">LOC_Os03g31290</name>
    <name evidence="4" type="ORF">OsJ_11344</name>
    <name type="ORF">OSJNBa0020H02.2</name>
</gene>
<accession>Q75GT2</accession>
<accession>Q0DR15</accession>
<name>MUB1_ORYSJ</name>
<protein>
    <recommendedName>
        <fullName>Membrane-anchored ubiquitin-fold protein 1</fullName>
        <shortName>Membrane-anchored ub-fold protein 1</shortName>
    </recommendedName>
    <alternativeName>
        <fullName>OsMUB1</fullName>
    </alternativeName>
</protein>
<keyword id="KW-1003">Cell membrane</keyword>
<keyword id="KW-0449">Lipoprotein</keyword>
<keyword id="KW-0472">Membrane</keyword>
<keyword id="KW-0488">Methylation</keyword>
<keyword id="KW-0636">Prenylation</keyword>
<keyword id="KW-1185">Reference proteome</keyword>
<sequence>MSGGVQEQFEIKFRLPDGTDIGPKRYPAASTVATLKESIVAQWPKDKEKGPRTVNDLKLINAGKILENNKTLSECKSPICDFSGLTTMHVVVRAPTSDKQSNKIVAKKPKDFRCGCSIM</sequence>
<reference key="1">
    <citation type="journal article" date="2005" name="Genome Res.">
        <title>Sequence, annotation, and analysis of synteny between rice chromosome 3 and diverged grass species.</title>
        <authorList>
            <consortium name="The rice chromosome 3 sequencing consortium"/>
            <person name="Buell C.R."/>
            <person name="Yuan Q."/>
            <person name="Ouyang S."/>
            <person name="Liu J."/>
            <person name="Zhu W."/>
            <person name="Wang A."/>
            <person name="Maiti R."/>
            <person name="Haas B."/>
            <person name="Wortman J."/>
            <person name="Pertea M."/>
            <person name="Jones K.M."/>
            <person name="Kim M."/>
            <person name="Overton L."/>
            <person name="Tsitrin T."/>
            <person name="Fadrosh D."/>
            <person name="Bera J."/>
            <person name="Weaver B."/>
            <person name="Jin S."/>
            <person name="Johri S."/>
            <person name="Reardon M."/>
            <person name="Webb K."/>
            <person name="Hill J."/>
            <person name="Moffat K."/>
            <person name="Tallon L."/>
            <person name="Van Aken S."/>
            <person name="Lewis M."/>
            <person name="Utterback T."/>
            <person name="Feldblyum T."/>
            <person name="Zismann V."/>
            <person name="Iobst S."/>
            <person name="Hsiao J."/>
            <person name="de Vazeille A.R."/>
            <person name="Salzberg S.L."/>
            <person name="White O."/>
            <person name="Fraser C.M."/>
            <person name="Yu Y."/>
            <person name="Kim H."/>
            <person name="Rambo T."/>
            <person name="Currie J."/>
            <person name="Collura K."/>
            <person name="Kernodle-Thompson S."/>
            <person name="Wei F."/>
            <person name="Kudrna K."/>
            <person name="Ammiraju J.S.S."/>
            <person name="Luo M."/>
            <person name="Goicoechea J.L."/>
            <person name="Wing R.A."/>
            <person name="Henry D."/>
            <person name="Oates R."/>
            <person name="Palmer M."/>
            <person name="Pries G."/>
            <person name="Saski C."/>
            <person name="Simmons J."/>
            <person name="Soderlund C."/>
            <person name="Nelson W."/>
            <person name="de la Bastide M."/>
            <person name="Spiegel L."/>
            <person name="Nascimento L."/>
            <person name="Huang E."/>
            <person name="Preston R."/>
            <person name="Zutavern T."/>
            <person name="Palmer L."/>
            <person name="O'Shaughnessy A."/>
            <person name="Dike S."/>
            <person name="McCombie W.R."/>
            <person name="Minx P."/>
            <person name="Cordum H."/>
            <person name="Wilson R."/>
            <person name="Jin W."/>
            <person name="Lee H.R."/>
            <person name="Jiang J."/>
            <person name="Jackson S."/>
        </authorList>
    </citation>
    <scope>NUCLEOTIDE SEQUENCE [LARGE SCALE GENOMIC DNA]</scope>
    <source>
        <strain>cv. Nipponbare</strain>
    </source>
</reference>
<reference key="2">
    <citation type="journal article" date="2005" name="Nature">
        <title>The map-based sequence of the rice genome.</title>
        <authorList>
            <consortium name="International rice genome sequencing project (IRGSP)"/>
        </authorList>
    </citation>
    <scope>NUCLEOTIDE SEQUENCE [LARGE SCALE GENOMIC DNA]</scope>
    <source>
        <strain>cv. Nipponbare</strain>
    </source>
</reference>
<reference key="3">
    <citation type="journal article" date="2008" name="Nucleic Acids Res.">
        <title>The rice annotation project database (RAP-DB): 2008 update.</title>
        <authorList>
            <consortium name="The rice annotation project (RAP)"/>
        </authorList>
    </citation>
    <scope>GENOME REANNOTATION</scope>
    <source>
        <strain>cv. Nipponbare</strain>
    </source>
</reference>
<reference key="4">
    <citation type="journal article" date="2013" name="Rice">
        <title>Improvement of the Oryza sativa Nipponbare reference genome using next generation sequence and optical map data.</title>
        <authorList>
            <person name="Kawahara Y."/>
            <person name="de la Bastide M."/>
            <person name="Hamilton J.P."/>
            <person name="Kanamori H."/>
            <person name="McCombie W.R."/>
            <person name="Ouyang S."/>
            <person name="Schwartz D.C."/>
            <person name="Tanaka T."/>
            <person name="Wu J."/>
            <person name="Zhou S."/>
            <person name="Childs K.L."/>
            <person name="Davidson R.M."/>
            <person name="Lin H."/>
            <person name="Quesada-Ocampo L."/>
            <person name="Vaillancourt B."/>
            <person name="Sakai H."/>
            <person name="Lee S.S."/>
            <person name="Kim J."/>
            <person name="Numa H."/>
            <person name="Itoh T."/>
            <person name="Buell C.R."/>
            <person name="Matsumoto T."/>
        </authorList>
    </citation>
    <scope>GENOME REANNOTATION</scope>
    <source>
        <strain>cv. Nipponbare</strain>
    </source>
</reference>
<reference key="5">
    <citation type="journal article" date="2005" name="PLoS Biol.">
        <title>The genomes of Oryza sativa: a history of duplications.</title>
        <authorList>
            <person name="Yu J."/>
            <person name="Wang J."/>
            <person name="Lin W."/>
            <person name="Li S."/>
            <person name="Li H."/>
            <person name="Zhou J."/>
            <person name="Ni P."/>
            <person name="Dong W."/>
            <person name="Hu S."/>
            <person name="Zeng C."/>
            <person name="Zhang J."/>
            <person name="Zhang Y."/>
            <person name="Li R."/>
            <person name="Xu Z."/>
            <person name="Li S."/>
            <person name="Li X."/>
            <person name="Zheng H."/>
            <person name="Cong L."/>
            <person name="Lin L."/>
            <person name="Yin J."/>
            <person name="Geng J."/>
            <person name="Li G."/>
            <person name="Shi J."/>
            <person name="Liu J."/>
            <person name="Lv H."/>
            <person name="Li J."/>
            <person name="Wang J."/>
            <person name="Deng Y."/>
            <person name="Ran L."/>
            <person name="Shi X."/>
            <person name="Wang X."/>
            <person name="Wu Q."/>
            <person name="Li C."/>
            <person name="Ren X."/>
            <person name="Wang J."/>
            <person name="Wang X."/>
            <person name="Li D."/>
            <person name="Liu D."/>
            <person name="Zhang X."/>
            <person name="Ji Z."/>
            <person name="Zhao W."/>
            <person name="Sun Y."/>
            <person name="Zhang Z."/>
            <person name="Bao J."/>
            <person name="Han Y."/>
            <person name="Dong L."/>
            <person name="Ji J."/>
            <person name="Chen P."/>
            <person name="Wu S."/>
            <person name="Liu J."/>
            <person name="Xiao Y."/>
            <person name="Bu D."/>
            <person name="Tan J."/>
            <person name="Yang L."/>
            <person name="Ye C."/>
            <person name="Zhang J."/>
            <person name="Xu J."/>
            <person name="Zhou Y."/>
            <person name="Yu Y."/>
            <person name="Zhang B."/>
            <person name="Zhuang S."/>
            <person name="Wei H."/>
            <person name="Liu B."/>
            <person name="Lei M."/>
            <person name="Yu H."/>
            <person name="Li Y."/>
            <person name="Xu H."/>
            <person name="Wei S."/>
            <person name="He X."/>
            <person name="Fang L."/>
            <person name="Zhang Z."/>
            <person name="Zhang Y."/>
            <person name="Huang X."/>
            <person name="Su Z."/>
            <person name="Tong W."/>
            <person name="Li J."/>
            <person name="Tong Z."/>
            <person name="Li S."/>
            <person name="Ye J."/>
            <person name="Wang L."/>
            <person name="Fang L."/>
            <person name="Lei T."/>
            <person name="Chen C.-S."/>
            <person name="Chen H.-C."/>
            <person name="Xu Z."/>
            <person name="Li H."/>
            <person name="Huang H."/>
            <person name="Zhang F."/>
            <person name="Xu H."/>
            <person name="Li N."/>
            <person name="Zhao C."/>
            <person name="Li S."/>
            <person name="Dong L."/>
            <person name="Huang Y."/>
            <person name="Li L."/>
            <person name="Xi Y."/>
            <person name="Qi Q."/>
            <person name="Li W."/>
            <person name="Zhang B."/>
            <person name="Hu W."/>
            <person name="Zhang Y."/>
            <person name="Tian X."/>
            <person name="Jiao Y."/>
            <person name="Liang X."/>
            <person name="Jin J."/>
            <person name="Gao L."/>
            <person name="Zheng W."/>
            <person name="Hao B."/>
            <person name="Liu S.-M."/>
            <person name="Wang W."/>
            <person name="Yuan L."/>
            <person name="Cao M."/>
            <person name="McDermott J."/>
            <person name="Samudrala R."/>
            <person name="Wang J."/>
            <person name="Wong G.K.-S."/>
            <person name="Yang H."/>
        </authorList>
    </citation>
    <scope>NUCLEOTIDE SEQUENCE [LARGE SCALE GENOMIC DNA]</scope>
    <source>
        <strain>cv. Nipponbare</strain>
    </source>
</reference>
<reference key="6">
    <citation type="journal article" date="2003" name="Science">
        <title>Collection, mapping, and annotation of over 28,000 cDNA clones from japonica rice.</title>
        <authorList>
            <consortium name="The rice full-length cDNA consortium"/>
        </authorList>
    </citation>
    <scope>NUCLEOTIDE SEQUENCE [LARGE SCALE MRNA]</scope>
    <source>
        <strain>cv. Nipponbare</strain>
    </source>
</reference>
<reference key="7">
    <citation type="journal article" date="2006" name="J. Biol. Chem.">
        <title>MUBS: a family of ubiquitin-fold proteins that are plasma membrane-anchored by prenylation.</title>
        <authorList>
            <person name="Downes B.P."/>
            <person name="Saracco S.A."/>
            <person name="Lee S.S."/>
            <person name="Crowell D.N."/>
            <person name="Vierstra R.D."/>
        </authorList>
    </citation>
    <scope>IDENTIFICATION</scope>
    <scope>NOMENCLATURE</scope>
</reference>
<comment type="function">
    <text evidence="1">May serve as docking site to facilitate the association of other proteins to the plasma membrane.</text>
</comment>
<comment type="subcellular location">
    <subcellularLocation>
        <location evidence="1">Cell membrane</location>
        <topology evidence="1">Lipid-anchor</topology>
    </subcellularLocation>
</comment>
<feature type="chain" id="PRO_0000248173" description="Membrane-anchored ubiquitin-fold protein 1">
    <location>
        <begin position="1"/>
        <end position="116"/>
    </location>
</feature>
<feature type="propeptide" id="PRO_0000248174" description="Removed in mature form" evidence="1">
    <location>
        <begin position="117"/>
        <end position="119"/>
    </location>
</feature>
<feature type="domain" description="Ubiquitin-like" evidence="2">
    <location>
        <begin position="9"/>
        <end position="75"/>
    </location>
</feature>
<feature type="modified residue" description="Cysteine methyl ester" evidence="3">
    <location>
        <position position="116"/>
    </location>
</feature>
<feature type="lipid moiety-binding region" description="S-farnesyl cysteine" evidence="1">
    <location>
        <position position="116"/>
    </location>
</feature>